<feature type="chain" id="PRO_0000128892" description="4-hydroxy-3-methylbut-2-enyl diphosphate reductase">
    <location>
        <begin position="1"/>
        <end position="316"/>
    </location>
</feature>
<feature type="active site" description="Proton donor" evidence="1">
    <location>
        <position position="126"/>
    </location>
</feature>
<feature type="binding site" evidence="1">
    <location>
        <position position="12"/>
    </location>
    <ligand>
        <name>[4Fe-4S] cluster</name>
        <dbReference type="ChEBI" id="CHEBI:49883"/>
    </ligand>
</feature>
<feature type="binding site" evidence="1">
    <location>
        <position position="41"/>
    </location>
    <ligand>
        <name>(2E)-4-hydroxy-3-methylbut-2-enyl diphosphate</name>
        <dbReference type="ChEBI" id="CHEBI:128753"/>
    </ligand>
</feature>
<feature type="binding site" evidence="1">
    <location>
        <position position="41"/>
    </location>
    <ligand>
        <name>dimethylallyl diphosphate</name>
        <dbReference type="ChEBI" id="CHEBI:57623"/>
    </ligand>
</feature>
<feature type="binding site" evidence="1">
    <location>
        <position position="41"/>
    </location>
    <ligand>
        <name>isopentenyl diphosphate</name>
        <dbReference type="ChEBI" id="CHEBI:128769"/>
    </ligand>
</feature>
<feature type="binding site" evidence="1">
    <location>
        <position position="74"/>
    </location>
    <ligand>
        <name>(2E)-4-hydroxy-3-methylbut-2-enyl diphosphate</name>
        <dbReference type="ChEBI" id="CHEBI:128753"/>
    </ligand>
</feature>
<feature type="binding site" evidence="1">
    <location>
        <position position="74"/>
    </location>
    <ligand>
        <name>dimethylallyl diphosphate</name>
        <dbReference type="ChEBI" id="CHEBI:57623"/>
    </ligand>
</feature>
<feature type="binding site" evidence="1">
    <location>
        <position position="74"/>
    </location>
    <ligand>
        <name>isopentenyl diphosphate</name>
        <dbReference type="ChEBI" id="CHEBI:128769"/>
    </ligand>
</feature>
<feature type="binding site" evidence="1">
    <location>
        <position position="96"/>
    </location>
    <ligand>
        <name>[4Fe-4S] cluster</name>
        <dbReference type="ChEBI" id="CHEBI:49883"/>
    </ligand>
</feature>
<feature type="binding site" evidence="1">
    <location>
        <position position="124"/>
    </location>
    <ligand>
        <name>(2E)-4-hydroxy-3-methylbut-2-enyl diphosphate</name>
        <dbReference type="ChEBI" id="CHEBI:128753"/>
    </ligand>
</feature>
<feature type="binding site" evidence="1">
    <location>
        <position position="124"/>
    </location>
    <ligand>
        <name>dimethylallyl diphosphate</name>
        <dbReference type="ChEBI" id="CHEBI:57623"/>
    </ligand>
</feature>
<feature type="binding site" evidence="1">
    <location>
        <position position="124"/>
    </location>
    <ligand>
        <name>isopentenyl diphosphate</name>
        <dbReference type="ChEBI" id="CHEBI:128769"/>
    </ligand>
</feature>
<feature type="binding site" evidence="1">
    <location>
        <position position="169"/>
    </location>
    <ligand>
        <name>(2E)-4-hydroxy-3-methylbut-2-enyl diphosphate</name>
        <dbReference type="ChEBI" id="CHEBI:128753"/>
    </ligand>
</feature>
<feature type="binding site" evidence="1">
    <location>
        <position position="199"/>
    </location>
    <ligand>
        <name>[4Fe-4S] cluster</name>
        <dbReference type="ChEBI" id="CHEBI:49883"/>
    </ligand>
</feature>
<feature type="binding site" evidence="1">
    <location>
        <position position="227"/>
    </location>
    <ligand>
        <name>(2E)-4-hydroxy-3-methylbut-2-enyl diphosphate</name>
        <dbReference type="ChEBI" id="CHEBI:128753"/>
    </ligand>
</feature>
<feature type="binding site" evidence="1">
    <location>
        <position position="227"/>
    </location>
    <ligand>
        <name>dimethylallyl diphosphate</name>
        <dbReference type="ChEBI" id="CHEBI:57623"/>
    </ligand>
</feature>
<feature type="binding site" evidence="1">
    <location>
        <position position="227"/>
    </location>
    <ligand>
        <name>isopentenyl diphosphate</name>
        <dbReference type="ChEBI" id="CHEBI:128769"/>
    </ligand>
</feature>
<feature type="binding site" evidence="1">
    <location>
        <position position="228"/>
    </location>
    <ligand>
        <name>(2E)-4-hydroxy-3-methylbut-2-enyl diphosphate</name>
        <dbReference type="ChEBI" id="CHEBI:128753"/>
    </ligand>
</feature>
<feature type="binding site" evidence="1">
    <location>
        <position position="228"/>
    </location>
    <ligand>
        <name>dimethylallyl diphosphate</name>
        <dbReference type="ChEBI" id="CHEBI:57623"/>
    </ligand>
</feature>
<feature type="binding site" evidence="1">
    <location>
        <position position="228"/>
    </location>
    <ligand>
        <name>isopentenyl diphosphate</name>
        <dbReference type="ChEBI" id="CHEBI:128769"/>
    </ligand>
</feature>
<feature type="binding site" evidence="1">
    <location>
        <position position="229"/>
    </location>
    <ligand>
        <name>(2E)-4-hydroxy-3-methylbut-2-enyl diphosphate</name>
        <dbReference type="ChEBI" id="CHEBI:128753"/>
    </ligand>
</feature>
<feature type="binding site" evidence="1">
    <location>
        <position position="229"/>
    </location>
    <ligand>
        <name>dimethylallyl diphosphate</name>
        <dbReference type="ChEBI" id="CHEBI:57623"/>
    </ligand>
</feature>
<feature type="binding site" evidence="1">
    <location>
        <position position="229"/>
    </location>
    <ligand>
        <name>isopentenyl diphosphate</name>
        <dbReference type="ChEBI" id="CHEBI:128769"/>
    </ligand>
</feature>
<feature type="binding site" evidence="1">
    <location>
        <position position="271"/>
    </location>
    <ligand>
        <name>(2E)-4-hydroxy-3-methylbut-2-enyl diphosphate</name>
        <dbReference type="ChEBI" id="CHEBI:128753"/>
    </ligand>
</feature>
<feature type="binding site" evidence="1">
    <location>
        <position position="271"/>
    </location>
    <ligand>
        <name>dimethylallyl diphosphate</name>
        <dbReference type="ChEBI" id="CHEBI:57623"/>
    </ligand>
</feature>
<feature type="binding site" evidence="1">
    <location>
        <position position="271"/>
    </location>
    <ligand>
        <name>isopentenyl diphosphate</name>
        <dbReference type="ChEBI" id="CHEBI:128769"/>
    </ligand>
</feature>
<name>ISPH_VIBVU</name>
<dbReference type="EC" id="1.17.7.4" evidence="1"/>
<dbReference type="EMBL" id="AE016795">
    <property type="protein sequence ID" value="AAO09023.1"/>
    <property type="status" value="ALT_INIT"/>
    <property type="molecule type" value="Genomic_DNA"/>
</dbReference>
<dbReference type="SMR" id="Q8DET0"/>
<dbReference type="KEGG" id="vvu:VV1_0504"/>
<dbReference type="HOGENOM" id="CLU_027486_1_0_6"/>
<dbReference type="UniPathway" id="UPA00056">
    <property type="reaction ID" value="UER00097"/>
</dbReference>
<dbReference type="UniPathway" id="UPA00059">
    <property type="reaction ID" value="UER00105"/>
</dbReference>
<dbReference type="Proteomes" id="UP000002275">
    <property type="component" value="Chromosome 1"/>
</dbReference>
<dbReference type="GO" id="GO:0051539">
    <property type="term" value="F:4 iron, 4 sulfur cluster binding"/>
    <property type="evidence" value="ECO:0007669"/>
    <property type="project" value="UniProtKB-UniRule"/>
</dbReference>
<dbReference type="GO" id="GO:0051745">
    <property type="term" value="F:4-hydroxy-3-methylbut-2-enyl diphosphate reductase activity"/>
    <property type="evidence" value="ECO:0007669"/>
    <property type="project" value="UniProtKB-UniRule"/>
</dbReference>
<dbReference type="GO" id="GO:0046872">
    <property type="term" value="F:metal ion binding"/>
    <property type="evidence" value="ECO:0007669"/>
    <property type="project" value="UniProtKB-KW"/>
</dbReference>
<dbReference type="GO" id="GO:0050992">
    <property type="term" value="P:dimethylallyl diphosphate biosynthetic process"/>
    <property type="evidence" value="ECO:0007669"/>
    <property type="project" value="UniProtKB-UniRule"/>
</dbReference>
<dbReference type="GO" id="GO:0019288">
    <property type="term" value="P:isopentenyl diphosphate biosynthetic process, methylerythritol 4-phosphate pathway"/>
    <property type="evidence" value="ECO:0007669"/>
    <property type="project" value="UniProtKB-UniRule"/>
</dbReference>
<dbReference type="GO" id="GO:0016114">
    <property type="term" value="P:terpenoid biosynthetic process"/>
    <property type="evidence" value="ECO:0007669"/>
    <property type="project" value="UniProtKB-UniRule"/>
</dbReference>
<dbReference type="CDD" id="cd13944">
    <property type="entry name" value="lytB_ispH"/>
    <property type="match status" value="1"/>
</dbReference>
<dbReference type="Gene3D" id="3.40.50.11270">
    <property type="match status" value="1"/>
</dbReference>
<dbReference type="Gene3D" id="3.40.1010.20">
    <property type="entry name" value="4-hydroxy-3-methylbut-2-enyl diphosphate reductase, catalytic domain"/>
    <property type="match status" value="2"/>
</dbReference>
<dbReference type="HAMAP" id="MF_00191">
    <property type="entry name" value="IspH"/>
    <property type="match status" value="1"/>
</dbReference>
<dbReference type="InterPro" id="IPR003451">
    <property type="entry name" value="LytB/IspH"/>
</dbReference>
<dbReference type="NCBIfam" id="TIGR00216">
    <property type="entry name" value="ispH_lytB"/>
    <property type="match status" value="1"/>
</dbReference>
<dbReference type="NCBIfam" id="NF002188">
    <property type="entry name" value="PRK01045.1-2"/>
    <property type="match status" value="1"/>
</dbReference>
<dbReference type="NCBIfam" id="NF002190">
    <property type="entry name" value="PRK01045.1-4"/>
    <property type="match status" value="1"/>
</dbReference>
<dbReference type="PANTHER" id="PTHR30426">
    <property type="entry name" value="4-HYDROXY-3-METHYLBUT-2-ENYL DIPHOSPHATE REDUCTASE"/>
    <property type="match status" value="1"/>
</dbReference>
<dbReference type="PANTHER" id="PTHR30426:SF0">
    <property type="entry name" value="4-HYDROXY-3-METHYLBUT-2-ENYL DIPHOSPHATE REDUCTASE"/>
    <property type="match status" value="1"/>
</dbReference>
<dbReference type="Pfam" id="PF02401">
    <property type="entry name" value="LYTB"/>
    <property type="match status" value="1"/>
</dbReference>
<keyword id="KW-0004">4Fe-4S</keyword>
<keyword id="KW-0408">Iron</keyword>
<keyword id="KW-0411">Iron-sulfur</keyword>
<keyword id="KW-0414">Isoprene biosynthesis</keyword>
<keyword id="KW-0479">Metal-binding</keyword>
<keyword id="KW-0560">Oxidoreductase</keyword>
<sequence>MKILLANPRGFCAGVDRAISIVERALELYQPPIYVRHEVVHNRFVVEGLKQRGAIFVEELHEVPDDNIVIFSAHGVSQAVRQEAKERALTVFDATCPLVTKVHMEVARASRKHMEVVLIGHAGHPEVEGTMGQYASLQGGMYLVEKPEDVLGLKAIVKDPSNLHYVSQTTLSVDETADVIDELRRVFPEIQGPRKDDICYATQNRQDAVRELAKDVDVVVVVGSKNSSNSTRLKELAEKLGTPAYLTDCPQDIEPQWFDGKVKVGVTAGASAPEELVNQILTRIKELGAQSVEEVLGREENMFFEVPKELQIKQID</sequence>
<gene>
    <name evidence="1" type="primary">ispH</name>
    <name type="synonym">lytB</name>
    <name type="ordered locus">VV1_0504</name>
</gene>
<evidence type="ECO:0000255" key="1">
    <source>
        <dbReference type="HAMAP-Rule" id="MF_00191"/>
    </source>
</evidence>
<evidence type="ECO:0000305" key="2"/>
<proteinExistence type="inferred from homology"/>
<protein>
    <recommendedName>
        <fullName evidence="1">4-hydroxy-3-methylbut-2-enyl diphosphate reductase</fullName>
        <shortName evidence="1">HMBPP reductase</shortName>
        <ecNumber evidence="1">1.17.7.4</ecNumber>
    </recommendedName>
</protein>
<accession>Q8DET0</accession>
<organism>
    <name type="scientific">Vibrio vulnificus (strain CMCP6)</name>
    <dbReference type="NCBI Taxonomy" id="216895"/>
    <lineage>
        <taxon>Bacteria</taxon>
        <taxon>Pseudomonadati</taxon>
        <taxon>Pseudomonadota</taxon>
        <taxon>Gammaproteobacteria</taxon>
        <taxon>Vibrionales</taxon>
        <taxon>Vibrionaceae</taxon>
        <taxon>Vibrio</taxon>
    </lineage>
</organism>
<comment type="function">
    <text evidence="1">Catalyzes the conversion of 1-hydroxy-2-methyl-2-(E)-butenyl 4-diphosphate (HMBPP) into a mixture of isopentenyl diphosphate (IPP) and dimethylallyl diphosphate (DMAPP). Acts in the terminal step of the DOXP/MEP pathway for isoprenoid precursor biosynthesis.</text>
</comment>
<comment type="catalytic activity">
    <reaction evidence="1">
        <text>isopentenyl diphosphate + 2 oxidized [2Fe-2S]-[ferredoxin] + H2O = (2E)-4-hydroxy-3-methylbut-2-enyl diphosphate + 2 reduced [2Fe-2S]-[ferredoxin] + 2 H(+)</text>
        <dbReference type="Rhea" id="RHEA:24488"/>
        <dbReference type="Rhea" id="RHEA-COMP:10000"/>
        <dbReference type="Rhea" id="RHEA-COMP:10001"/>
        <dbReference type="ChEBI" id="CHEBI:15377"/>
        <dbReference type="ChEBI" id="CHEBI:15378"/>
        <dbReference type="ChEBI" id="CHEBI:33737"/>
        <dbReference type="ChEBI" id="CHEBI:33738"/>
        <dbReference type="ChEBI" id="CHEBI:128753"/>
        <dbReference type="ChEBI" id="CHEBI:128769"/>
        <dbReference type="EC" id="1.17.7.4"/>
    </reaction>
</comment>
<comment type="catalytic activity">
    <reaction evidence="1">
        <text>dimethylallyl diphosphate + 2 oxidized [2Fe-2S]-[ferredoxin] + H2O = (2E)-4-hydroxy-3-methylbut-2-enyl diphosphate + 2 reduced [2Fe-2S]-[ferredoxin] + 2 H(+)</text>
        <dbReference type="Rhea" id="RHEA:24825"/>
        <dbReference type="Rhea" id="RHEA-COMP:10000"/>
        <dbReference type="Rhea" id="RHEA-COMP:10001"/>
        <dbReference type="ChEBI" id="CHEBI:15377"/>
        <dbReference type="ChEBI" id="CHEBI:15378"/>
        <dbReference type="ChEBI" id="CHEBI:33737"/>
        <dbReference type="ChEBI" id="CHEBI:33738"/>
        <dbReference type="ChEBI" id="CHEBI:57623"/>
        <dbReference type="ChEBI" id="CHEBI:128753"/>
        <dbReference type="EC" id="1.17.7.4"/>
    </reaction>
</comment>
<comment type="cofactor">
    <cofactor evidence="1">
        <name>[4Fe-4S] cluster</name>
        <dbReference type="ChEBI" id="CHEBI:49883"/>
    </cofactor>
    <text evidence="1">Binds 1 [4Fe-4S] cluster per subunit.</text>
</comment>
<comment type="pathway">
    <text evidence="1">Isoprenoid biosynthesis; dimethylallyl diphosphate biosynthesis; dimethylallyl diphosphate from (2E)-4-hydroxy-3-methylbutenyl diphosphate: step 1/1.</text>
</comment>
<comment type="pathway">
    <text evidence="1">Isoprenoid biosynthesis; isopentenyl diphosphate biosynthesis via DXP pathway; isopentenyl diphosphate from 1-deoxy-D-xylulose 5-phosphate: step 6/6.</text>
</comment>
<comment type="similarity">
    <text evidence="1">Belongs to the IspH family.</text>
</comment>
<comment type="sequence caution" evidence="2">
    <conflict type="erroneous initiation">
        <sequence resource="EMBL-CDS" id="AAO09023"/>
    </conflict>
</comment>
<reference key="1">
    <citation type="submission" date="2002-12" db="EMBL/GenBank/DDBJ databases">
        <title>Complete genome sequence of Vibrio vulnificus CMCP6.</title>
        <authorList>
            <person name="Rhee J.H."/>
            <person name="Kim S.Y."/>
            <person name="Chung S.S."/>
            <person name="Kim J.J."/>
            <person name="Moon Y.H."/>
            <person name="Jeong H."/>
            <person name="Choy H.E."/>
        </authorList>
    </citation>
    <scope>NUCLEOTIDE SEQUENCE [LARGE SCALE GENOMIC DNA]</scope>
    <source>
        <strain>CMCP6</strain>
    </source>
</reference>